<reference key="1">
    <citation type="journal article" date="2005" name="Genome Res.">
        <title>Coping with cold: the genome of the versatile marine Antarctica bacterium Pseudoalteromonas haloplanktis TAC125.</title>
        <authorList>
            <person name="Medigue C."/>
            <person name="Krin E."/>
            <person name="Pascal G."/>
            <person name="Barbe V."/>
            <person name="Bernsel A."/>
            <person name="Bertin P.N."/>
            <person name="Cheung F."/>
            <person name="Cruveiller S."/>
            <person name="D'Amico S."/>
            <person name="Duilio A."/>
            <person name="Fang G."/>
            <person name="Feller G."/>
            <person name="Ho C."/>
            <person name="Mangenot S."/>
            <person name="Marino G."/>
            <person name="Nilsson J."/>
            <person name="Parrilli E."/>
            <person name="Rocha E.P.C."/>
            <person name="Rouy Z."/>
            <person name="Sekowska A."/>
            <person name="Tutino M.L."/>
            <person name="Vallenet D."/>
            <person name="von Heijne G."/>
            <person name="Danchin A."/>
        </authorList>
    </citation>
    <scope>NUCLEOTIDE SEQUENCE [LARGE SCALE GENOMIC DNA]</scope>
    <source>
        <strain>TAC 125</strain>
    </source>
</reference>
<evidence type="ECO:0000255" key="1">
    <source>
        <dbReference type="HAMAP-Rule" id="MF_00472"/>
    </source>
</evidence>
<protein>
    <recommendedName>
        <fullName evidence="1">Ubiquinone biosynthesis O-methyltransferase</fullName>
    </recommendedName>
    <alternativeName>
        <fullName evidence="1">2-polyprenyl-6-hydroxyphenol methylase</fullName>
        <ecNumber evidence="1">2.1.1.222</ecNumber>
    </alternativeName>
    <alternativeName>
        <fullName evidence="1">3-demethylubiquinone 3-O-methyltransferase</fullName>
        <ecNumber evidence="1">2.1.1.64</ecNumber>
    </alternativeName>
</protein>
<name>UBIG_PSET1</name>
<gene>
    <name evidence="1" type="primary">ubiG</name>
    <name type="ordered locus">PSHAa1420</name>
</gene>
<organism>
    <name type="scientific">Pseudoalteromonas translucida (strain TAC 125)</name>
    <dbReference type="NCBI Taxonomy" id="326442"/>
    <lineage>
        <taxon>Bacteria</taxon>
        <taxon>Pseudomonadati</taxon>
        <taxon>Pseudomonadota</taxon>
        <taxon>Gammaproteobacteria</taxon>
        <taxon>Alteromonadales</taxon>
        <taxon>Pseudoalteromonadaceae</taxon>
        <taxon>Pseudoalteromonas</taxon>
    </lineage>
</organism>
<accession>Q3ILA5</accession>
<comment type="function">
    <text evidence="1">O-methyltransferase that catalyzes the 2 O-methylation steps in the ubiquinone biosynthetic pathway.</text>
</comment>
<comment type="catalytic activity">
    <reaction evidence="1">
        <text>a 3-demethylubiquinol + S-adenosyl-L-methionine = a ubiquinol + S-adenosyl-L-homocysteine + H(+)</text>
        <dbReference type="Rhea" id="RHEA:44380"/>
        <dbReference type="Rhea" id="RHEA-COMP:9566"/>
        <dbReference type="Rhea" id="RHEA-COMP:10914"/>
        <dbReference type="ChEBI" id="CHEBI:15378"/>
        <dbReference type="ChEBI" id="CHEBI:17976"/>
        <dbReference type="ChEBI" id="CHEBI:57856"/>
        <dbReference type="ChEBI" id="CHEBI:59789"/>
        <dbReference type="ChEBI" id="CHEBI:84422"/>
        <dbReference type="EC" id="2.1.1.64"/>
    </reaction>
</comment>
<comment type="catalytic activity">
    <reaction evidence="1">
        <text>a 3-(all-trans-polyprenyl)benzene-1,2-diol + S-adenosyl-L-methionine = a 2-methoxy-6-(all-trans-polyprenyl)phenol + S-adenosyl-L-homocysteine + H(+)</text>
        <dbReference type="Rhea" id="RHEA:31411"/>
        <dbReference type="Rhea" id="RHEA-COMP:9550"/>
        <dbReference type="Rhea" id="RHEA-COMP:9551"/>
        <dbReference type="ChEBI" id="CHEBI:15378"/>
        <dbReference type="ChEBI" id="CHEBI:57856"/>
        <dbReference type="ChEBI" id="CHEBI:59789"/>
        <dbReference type="ChEBI" id="CHEBI:62729"/>
        <dbReference type="ChEBI" id="CHEBI:62731"/>
        <dbReference type="EC" id="2.1.1.222"/>
    </reaction>
</comment>
<comment type="pathway">
    <text evidence="1">Cofactor biosynthesis; ubiquinone biosynthesis.</text>
</comment>
<comment type="similarity">
    <text evidence="1">Belongs to the methyltransferase superfamily. UbiG/COQ3 family.</text>
</comment>
<keyword id="KW-0489">Methyltransferase</keyword>
<keyword id="KW-1185">Reference proteome</keyword>
<keyword id="KW-0949">S-adenosyl-L-methionine</keyword>
<keyword id="KW-0808">Transferase</keyword>
<keyword id="KW-0831">Ubiquinone biosynthesis</keyword>
<feature type="chain" id="PRO_0000241717" description="Ubiquinone biosynthesis O-methyltransferase">
    <location>
        <begin position="1"/>
        <end position="236"/>
    </location>
</feature>
<feature type="binding site" evidence="1">
    <location>
        <position position="39"/>
    </location>
    <ligand>
        <name>S-adenosyl-L-methionine</name>
        <dbReference type="ChEBI" id="CHEBI:59789"/>
    </ligand>
</feature>
<feature type="binding site" evidence="1">
    <location>
        <position position="59"/>
    </location>
    <ligand>
        <name>S-adenosyl-L-methionine</name>
        <dbReference type="ChEBI" id="CHEBI:59789"/>
    </ligand>
</feature>
<feature type="binding site" evidence="1">
    <location>
        <position position="80"/>
    </location>
    <ligand>
        <name>S-adenosyl-L-methionine</name>
        <dbReference type="ChEBI" id="CHEBI:59789"/>
    </ligand>
</feature>
<feature type="binding site" evidence="1">
    <location>
        <position position="124"/>
    </location>
    <ligand>
        <name>S-adenosyl-L-methionine</name>
        <dbReference type="ChEBI" id="CHEBI:59789"/>
    </ligand>
</feature>
<proteinExistence type="inferred from homology"/>
<sequence length="236" mass="26041">MTEHQNVDHAEIAKFEAIAERWWDLDGEFKPLHEINPLRLDFIANKTGGLFDKETLDVGCGGGILSQSMARMGAKVTGIDMGQEPLTVAKLHSLETGVNVEYIKVPAEQYASEHPARFDVVTCMEMLEHVPDPASIIHAVAELAKPGADVFFSTLNKTPKAYLYAIIGAEKLLKMVPEGTHDHKKFIKPAQLIAWAEQAGLKVRASAGLSYNPLSKQYSLNTDVSVNYILHFEKLA</sequence>
<dbReference type="EC" id="2.1.1.222" evidence="1"/>
<dbReference type="EC" id="2.1.1.64" evidence="1"/>
<dbReference type="EMBL" id="CR954246">
    <property type="protein sequence ID" value="CAI86495.1"/>
    <property type="molecule type" value="Genomic_DNA"/>
</dbReference>
<dbReference type="SMR" id="Q3ILA5"/>
<dbReference type="STRING" id="326442.PSHAa1420"/>
<dbReference type="KEGG" id="pha:PSHAa1420"/>
<dbReference type="PATRIC" id="fig|326442.8.peg.1375"/>
<dbReference type="eggNOG" id="COG2227">
    <property type="taxonomic scope" value="Bacteria"/>
</dbReference>
<dbReference type="HOGENOM" id="CLU_042432_5_0_6"/>
<dbReference type="BioCyc" id="PHAL326442:PSHA_RS06990-MONOMER"/>
<dbReference type="UniPathway" id="UPA00232"/>
<dbReference type="Proteomes" id="UP000006843">
    <property type="component" value="Chromosome I"/>
</dbReference>
<dbReference type="GO" id="GO:0102208">
    <property type="term" value="F:2-polyprenyl-6-hydroxyphenol methylase activity"/>
    <property type="evidence" value="ECO:0007669"/>
    <property type="project" value="UniProtKB-EC"/>
</dbReference>
<dbReference type="GO" id="GO:0061542">
    <property type="term" value="F:3-demethylubiquinol 3-O-methyltransferase activity"/>
    <property type="evidence" value="ECO:0007669"/>
    <property type="project" value="UniProtKB-UniRule"/>
</dbReference>
<dbReference type="GO" id="GO:0010420">
    <property type="term" value="F:polyprenyldihydroxybenzoate methyltransferase activity"/>
    <property type="evidence" value="ECO:0007669"/>
    <property type="project" value="InterPro"/>
</dbReference>
<dbReference type="GO" id="GO:0032259">
    <property type="term" value="P:methylation"/>
    <property type="evidence" value="ECO:0007669"/>
    <property type="project" value="UniProtKB-KW"/>
</dbReference>
<dbReference type="CDD" id="cd02440">
    <property type="entry name" value="AdoMet_MTases"/>
    <property type="match status" value="1"/>
</dbReference>
<dbReference type="FunFam" id="3.40.50.150:FF:000028">
    <property type="entry name" value="Ubiquinone biosynthesis O-methyltransferase"/>
    <property type="match status" value="1"/>
</dbReference>
<dbReference type="Gene3D" id="3.40.50.150">
    <property type="entry name" value="Vaccinia Virus protein VP39"/>
    <property type="match status" value="1"/>
</dbReference>
<dbReference type="HAMAP" id="MF_00472">
    <property type="entry name" value="UbiG"/>
    <property type="match status" value="1"/>
</dbReference>
<dbReference type="InterPro" id="IPR029063">
    <property type="entry name" value="SAM-dependent_MTases_sf"/>
</dbReference>
<dbReference type="InterPro" id="IPR010233">
    <property type="entry name" value="UbiG_MeTrfase"/>
</dbReference>
<dbReference type="NCBIfam" id="TIGR01983">
    <property type="entry name" value="UbiG"/>
    <property type="match status" value="1"/>
</dbReference>
<dbReference type="PANTHER" id="PTHR43464">
    <property type="entry name" value="METHYLTRANSFERASE"/>
    <property type="match status" value="1"/>
</dbReference>
<dbReference type="PANTHER" id="PTHR43464:SF19">
    <property type="entry name" value="UBIQUINONE BIOSYNTHESIS O-METHYLTRANSFERASE, MITOCHONDRIAL"/>
    <property type="match status" value="1"/>
</dbReference>
<dbReference type="Pfam" id="PF13489">
    <property type="entry name" value="Methyltransf_23"/>
    <property type="match status" value="1"/>
</dbReference>
<dbReference type="SUPFAM" id="SSF53335">
    <property type="entry name" value="S-adenosyl-L-methionine-dependent methyltransferases"/>
    <property type="match status" value="1"/>
</dbReference>